<comment type="catalytic activity">
    <reaction evidence="1">
        <text>urea + 2 H2O + H(+) = hydrogencarbonate + 2 NH4(+)</text>
        <dbReference type="Rhea" id="RHEA:20557"/>
        <dbReference type="ChEBI" id="CHEBI:15377"/>
        <dbReference type="ChEBI" id="CHEBI:15378"/>
        <dbReference type="ChEBI" id="CHEBI:16199"/>
        <dbReference type="ChEBI" id="CHEBI:17544"/>
        <dbReference type="ChEBI" id="CHEBI:28938"/>
        <dbReference type="EC" id="3.5.1.5"/>
    </reaction>
</comment>
<comment type="pathway">
    <text evidence="1">Nitrogen metabolism; urea degradation; CO(2) and NH(3) from urea (urease route): step 1/1.</text>
</comment>
<comment type="subunit">
    <text evidence="1">Heterotrimer of UreA (gamma), UreB (beta) and UreC (alpha) subunits. Three heterotrimers associate to form the active enzyme.</text>
</comment>
<comment type="subcellular location">
    <subcellularLocation>
        <location evidence="1">Cytoplasm</location>
    </subcellularLocation>
</comment>
<comment type="similarity">
    <text evidence="1">Belongs to the urease beta subunit family.</text>
</comment>
<sequence>MIPGELFIEDGEIELNAGRKTVTLTVSNTGDRPIQVGSHYHFFETNPALKFDRDKARGMRLDIAAGTAVRFEPGQSRDVQLVELAGKRTIYGFRGDVMGKL</sequence>
<protein>
    <recommendedName>
        <fullName evidence="1">Urease subunit beta</fullName>
        <ecNumber evidence="1">3.5.1.5</ecNumber>
    </recommendedName>
    <alternativeName>
        <fullName evidence="1">Urea amidohydrolase subunit beta</fullName>
    </alternativeName>
</protein>
<evidence type="ECO:0000255" key="1">
    <source>
        <dbReference type="HAMAP-Rule" id="MF_01954"/>
    </source>
</evidence>
<name>URE2_RHOPA</name>
<reference key="1">
    <citation type="journal article" date="2004" name="Nat. Biotechnol.">
        <title>Complete genome sequence of the metabolically versatile photosynthetic bacterium Rhodopseudomonas palustris.</title>
        <authorList>
            <person name="Larimer F.W."/>
            <person name="Chain P."/>
            <person name="Hauser L."/>
            <person name="Lamerdin J.E."/>
            <person name="Malfatti S."/>
            <person name="Do L."/>
            <person name="Land M.L."/>
            <person name="Pelletier D.A."/>
            <person name="Beatty J.T."/>
            <person name="Lang A.S."/>
            <person name="Tabita F.R."/>
            <person name="Gibson J.L."/>
            <person name="Hanson T.E."/>
            <person name="Bobst C."/>
            <person name="Torres y Torres J.L."/>
            <person name="Peres C."/>
            <person name="Harrison F.H."/>
            <person name="Gibson J."/>
            <person name="Harwood C.S."/>
        </authorList>
    </citation>
    <scope>NUCLEOTIDE SEQUENCE [LARGE SCALE GENOMIC DNA]</scope>
    <source>
        <strain>ATCC BAA-98 / CGA009</strain>
    </source>
</reference>
<feature type="chain" id="PRO_0000234271" description="Urease subunit beta">
    <location>
        <begin position="1"/>
        <end position="101"/>
    </location>
</feature>
<keyword id="KW-0963">Cytoplasm</keyword>
<keyword id="KW-0378">Hydrolase</keyword>
<organism>
    <name type="scientific">Rhodopseudomonas palustris (strain ATCC BAA-98 / CGA009)</name>
    <dbReference type="NCBI Taxonomy" id="258594"/>
    <lineage>
        <taxon>Bacteria</taxon>
        <taxon>Pseudomonadati</taxon>
        <taxon>Pseudomonadota</taxon>
        <taxon>Alphaproteobacteria</taxon>
        <taxon>Hyphomicrobiales</taxon>
        <taxon>Nitrobacteraceae</taxon>
        <taxon>Rhodopseudomonas</taxon>
    </lineage>
</organism>
<gene>
    <name evidence="1" type="primary">ureB</name>
    <name type="ordered locus">RPA3662</name>
</gene>
<accession>Q6N3N1</accession>
<proteinExistence type="inferred from homology"/>
<dbReference type="EC" id="3.5.1.5" evidence="1"/>
<dbReference type="EMBL" id="BX572604">
    <property type="protein sequence ID" value="CAE29103.1"/>
    <property type="molecule type" value="Genomic_DNA"/>
</dbReference>
<dbReference type="RefSeq" id="WP_011159201.1">
    <property type="nucleotide sequence ID" value="NZ_CP116810.1"/>
</dbReference>
<dbReference type="SMR" id="Q6N3N1"/>
<dbReference type="STRING" id="258594.RPA3662"/>
<dbReference type="GeneID" id="66894768"/>
<dbReference type="eggNOG" id="COG0832">
    <property type="taxonomic scope" value="Bacteria"/>
</dbReference>
<dbReference type="HOGENOM" id="CLU_129707_1_1_5"/>
<dbReference type="PhylomeDB" id="Q6N3N1"/>
<dbReference type="UniPathway" id="UPA00258">
    <property type="reaction ID" value="UER00370"/>
</dbReference>
<dbReference type="GO" id="GO:0035550">
    <property type="term" value="C:urease complex"/>
    <property type="evidence" value="ECO:0007669"/>
    <property type="project" value="InterPro"/>
</dbReference>
<dbReference type="GO" id="GO:0009039">
    <property type="term" value="F:urease activity"/>
    <property type="evidence" value="ECO:0007669"/>
    <property type="project" value="UniProtKB-UniRule"/>
</dbReference>
<dbReference type="GO" id="GO:0043419">
    <property type="term" value="P:urea catabolic process"/>
    <property type="evidence" value="ECO:0007669"/>
    <property type="project" value="UniProtKB-UniRule"/>
</dbReference>
<dbReference type="CDD" id="cd00407">
    <property type="entry name" value="Urease_beta"/>
    <property type="match status" value="1"/>
</dbReference>
<dbReference type="FunFam" id="2.10.150.10:FF:000001">
    <property type="entry name" value="Urease subunit beta"/>
    <property type="match status" value="1"/>
</dbReference>
<dbReference type="Gene3D" id="2.10.150.10">
    <property type="entry name" value="Urease, beta subunit"/>
    <property type="match status" value="1"/>
</dbReference>
<dbReference type="HAMAP" id="MF_01954">
    <property type="entry name" value="Urease_beta"/>
    <property type="match status" value="1"/>
</dbReference>
<dbReference type="InterPro" id="IPR002019">
    <property type="entry name" value="Urease_beta-like"/>
</dbReference>
<dbReference type="InterPro" id="IPR036461">
    <property type="entry name" value="Urease_betasu_sf"/>
</dbReference>
<dbReference type="InterPro" id="IPR050069">
    <property type="entry name" value="Urease_subunit"/>
</dbReference>
<dbReference type="NCBIfam" id="NF009682">
    <property type="entry name" value="PRK13203.1"/>
    <property type="match status" value="1"/>
</dbReference>
<dbReference type="NCBIfam" id="TIGR00192">
    <property type="entry name" value="urease_beta"/>
    <property type="match status" value="1"/>
</dbReference>
<dbReference type="PANTHER" id="PTHR33569">
    <property type="entry name" value="UREASE"/>
    <property type="match status" value="1"/>
</dbReference>
<dbReference type="PANTHER" id="PTHR33569:SF1">
    <property type="entry name" value="UREASE"/>
    <property type="match status" value="1"/>
</dbReference>
<dbReference type="Pfam" id="PF00699">
    <property type="entry name" value="Urease_beta"/>
    <property type="match status" value="1"/>
</dbReference>
<dbReference type="SUPFAM" id="SSF51278">
    <property type="entry name" value="Urease, beta-subunit"/>
    <property type="match status" value="1"/>
</dbReference>